<reference key="1">
    <citation type="journal article" date="2000" name="J. Biol. Chem.">
        <title>TASK-3, a novel tandem pore domain acid-sensitive K+ channel. An extracellular histidine as pH sensor.</title>
        <authorList>
            <person name="Rajan S."/>
            <person name="Wischmeyer E."/>
            <person name="Liu G.X."/>
            <person name="Preisig-Mueller R."/>
            <person name="Daut J."/>
            <person name="Karschin A."/>
            <person name="Derst C."/>
        </authorList>
    </citation>
    <scope>NUCLEOTIDE SEQUENCE [MRNA]</scope>
    <scope>FUNCTION</scope>
    <scope>TRANSPORTER ACTIVITY</scope>
    <scope>ACTIVITY REGULATION</scope>
    <scope>SITE</scope>
    <scope>TISSUE SPECIFICITY</scope>
    <scope>MUTAGENESIS OF HIS-98</scope>
    <source>
        <tissue>Brain</tissue>
    </source>
</reference>
<accession>Q9JL58</accession>
<dbReference type="EMBL" id="AF212827">
    <property type="protein sequence ID" value="AAF63706.1"/>
    <property type="molecule type" value="mRNA"/>
</dbReference>
<dbReference type="RefSeq" id="NP_001166448.1">
    <property type="nucleotide sequence ID" value="NM_001172977.1"/>
</dbReference>
<dbReference type="SMR" id="Q9JL58"/>
<dbReference type="FunCoup" id="Q9JL58">
    <property type="interactions" value="57"/>
</dbReference>
<dbReference type="STRING" id="10141.ENSCPOP00000017207"/>
<dbReference type="GlyCosmos" id="Q9JL58">
    <property type="glycosylation" value="1 site, No reported glycans"/>
</dbReference>
<dbReference type="GeneID" id="100135568"/>
<dbReference type="KEGG" id="cpoc:100135568"/>
<dbReference type="CTD" id="51305"/>
<dbReference type="eggNOG" id="KOG4404">
    <property type="taxonomic scope" value="Eukaryota"/>
</dbReference>
<dbReference type="InParanoid" id="Q9JL58"/>
<dbReference type="OrthoDB" id="297496at2759"/>
<dbReference type="Proteomes" id="UP000005447">
    <property type="component" value="Unassembled WGS sequence"/>
</dbReference>
<dbReference type="GO" id="GO:0030425">
    <property type="term" value="C:dendrite"/>
    <property type="evidence" value="ECO:0007669"/>
    <property type="project" value="UniProtKB-SubCell"/>
</dbReference>
<dbReference type="GO" id="GO:0005743">
    <property type="term" value="C:mitochondrial inner membrane"/>
    <property type="evidence" value="ECO:0000250"/>
    <property type="project" value="UniProtKB"/>
</dbReference>
<dbReference type="GO" id="GO:0005886">
    <property type="term" value="C:plasma membrane"/>
    <property type="evidence" value="ECO:0000250"/>
    <property type="project" value="UniProtKB"/>
</dbReference>
<dbReference type="GO" id="GO:0046872">
    <property type="term" value="F:metal ion binding"/>
    <property type="evidence" value="ECO:0007669"/>
    <property type="project" value="UniProtKB-KW"/>
</dbReference>
<dbReference type="GO" id="GO:0015271">
    <property type="term" value="F:outward rectifier potassium channel activity"/>
    <property type="evidence" value="ECO:0000250"/>
    <property type="project" value="UniProtKB"/>
</dbReference>
<dbReference type="GO" id="GO:0022841">
    <property type="term" value="F:potassium ion leak channel activity"/>
    <property type="evidence" value="ECO:0007669"/>
    <property type="project" value="TreeGrafter"/>
</dbReference>
<dbReference type="GO" id="GO:0046982">
    <property type="term" value="F:protein heterodimerization activity"/>
    <property type="evidence" value="ECO:0000250"/>
    <property type="project" value="UniProtKB"/>
</dbReference>
<dbReference type="GO" id="GO:0005272">
    <property type="term" value="F:sodium channel activity"/>
    <property type="evidence" value="ECO:0007669"/>
    <property type="project" value="UniProtKB-KW"/>
</dbReference>
<dbReference type="GO" id="GO:2000859">
    <property type="term" value="P:negative regulation of aldosterone secretion"/>
    <property type="evidence" value="ECO:0000250"/>
    <property type="project" value="UniProtKB"/>
</dbReference>
<dbReference type="GO" id="GO:0099605">
    <property type="term" value="P:regulation of action potential firing rate"/>
    <property type="evidence" value="ECO:0000250"/>
    <property type="project" value="UniProtKB"/>
</dbReference>
<dbReference type="GO" id="GO:0060075">
    <property type="term" value="P:regulation of resting membrane potential"/>
    <property type="evidence" value="ECO:0000250"/>
    <property type="project" value="UniProtKB"/>
</dbReference>
<dbReference type="GO" id="GO:0030322">
    <property type="term" value="P:stabilization of membrane potential"/>
    <property type="evidence" value="ECO:0007669"/>
    <property type="project" value="TreeGrafter"/>
</dbReference>
<dbReference type="GO" id="GO:0007601">
    <property type="term" value="P:visual perception"/>
    <property type="evidence" value="ECO:0000250"/>
    <property type="project" value="UniProtKB"/>
</dbReference>
<dbReference type="FunFam" id="1.10.287.70:FF:000057">
    <property type="entry name" value="Potassium channel subfamily K member"/>
    <property type="match status" value="1"/>
</dbReference>
<dbReference type="Gene3D" id="1.10.287.70">
    <property type="match status" value="1"/>
</dbReference>
<dbReference type="InterPro" id="IPR003280">
    <property type="entry name" value="2pore_dom_K_chnl"/>
</dbReference>
<dbReference type="InterPro" id="IPR003092">
    <property type="entry name" value="2pore_dom_K_chnl_TASK"/>
</dbReference>
<dbReference type="InterPro" id="IPR013099">
    <property type="entry name" value="K_chnl_dom"/>
</dbReference>
<dbReference type="InterPro" id="IPR005407">
    <property type="entry name" value="KCNK9"/>
</dbReference>
<dbReference type="PANTHER" id="PTHR11003:SF75">
    <property type="entry name" value="POTASSIUM CHANNEL SUBFAMILY K MEMBER 9"/>
    <property type="match status" value="1"/>
</dbReference>
<dbReference type="PANTHER" id="PTHR11003">
    <property type="entry name" value="POTASSIUM CHANNEL, SUBFAMILY K"/>
    <property type="match status" value="1"/>
</dbReference>
<dbReference type="Pfam" id="PF07885">
    <property type="entry name" value="Ion_trans_2"/>
    <property type="match status" value="2"/>
</dbReference>
<dbReference type="PIRSF" id="PIRSF038061">
    <property type="entry name" value="K_channel_subfamily_K_type"/>
    <property type="match status" value="1"/>
</dbReference>
<dbReference type="PRINTS" id="PR01333">
    <property type="entry name" value="2POREKCHANEL"/>
</dbReference>
<dbReference type="PRINTS" id="PR01585">
    <property type="entry name" value="TASK3CHANNEL"/>
</dbReference>
<dbReference type="PRINTS" id="PR01095">
    <property type="entry name" value="TASKCHANNEL"/>
</dbReference>
<dbReference type="SUPFAM" id="SSF81324">
    <property type="entry name" value="Voltage-gated potassium channels"/>
    <property type="match status" value="2"/>
</dbReference>
<name>KCNK9_CAVPO</name>
<evidence type="ECO:0000250" key="1">
    <source>
        <dbReference type="UniProtKB" id="P57789"/>
    </source>
</evidence>
<evidence type="ECO:0000250" key="2">
    <source>
        <dbReference type="UniProtKB" id="Q3LS21"/>
    </source>
</evidence>
<evidence type="ECO:0000250" key="3">
    <source>
        <dbReference type="UniProtKB" id="Q9ES08"/>
    </source>
</evidence>
<evidence type="ECO:0000250" key="4">
    <source>
        <dbReference type="UniProtKB" id="Q9NPC2"/>
    </source>
</evidence>
<evidence type="ECO:0000255" key="5"/>
<evidence type="ECO:0000269" key="6">
    <source>
    </source>
</evidence>
<evidence type="ECO:0000305" key="7"/>
<gene>
    <name type="primary">KCNK9</name>
    <name type="synonym">TASK3</name>
</gene>
<sequence length="365" mass="40769">MKKQNVRTLSLIACTFTYLLVGAAVFDALESDHEMREEEKLKAEEIRIRGKYNISTEDYRQLELVILQSEPHRAGVQWKFAGSFYFAITVITTIGYGHAAPGTDAGKAFCMFYAVLGIPLTLVMFQSLGERMNTFVRYLLKRIKKCCGMRNTEVSMENMVTVGFFSCMGTLCIGAAAFSQCEEWSFFHAYYYCFITLTTIGFGDYVALQSKGALQRKPFYVAFSFMYILVGLTVIGAFLNLVVLRFLTMNSDEERGEGEEGAALPGNPSSVVTHISEEARQVRQRYRGEGGDLQSVCSCACYRSQPQNFGATLAPQPLHSISCRIEEISPSTLKNSLFPSPISSVSPGLHSFGDNHRLMLRRKSV</sequence>
<organism>
    <name type="scientific">Cavia porcellus</name>
    <name type="common">Guinea pig</name>
    <dbReference type="NCBI Taxonomy" id="10141"/>
    <lineage>
        <taxon>Eukaryota</taxon>
        <taxon>Metazoa</taxon>
        <taxon>Chordata</taxon>
        <taxon>Craniata</taxon>
        <taxon>Vertebrata</taxon>
        <taxon>Euteleostomi</taxon>
        <taxon>Mammalia</taxon>
        <taxon>Eutheria</taxon>
        <taxon>Euarchontoglires</taxon>
        <taxon>Glires</taxon>
        <taxon>Rodentia</taxon>
        <taxon>Hystricomorpha</taxon>
        <taxon>Caviidae</taxon>
        <taxon>Cavia</taxon>
    </lineage>
</organism>
<keyword id="KW-1003">Cell membrane</keyword>
<keyword id="KW-0966">Cell projection</keyword>
<keyword id="KW-0325">Glycoprotein</keyword>
<keyword id="KW-0407">Ion channel</keyword>
<keyword id="KW-0406">Ion transport</keyword>
<keyword id="KW-0472">Membrane</keyword>
<keyword id="KW-0479">Metal-binding</keyword>
<keyword id="KW-0496">Mitochondrion</keyword>
<keyword id="KW-0999">Mitochondrion inner membrane</keyword>
<keyword id="KW-0630">Potassium</keyword>
<keyword id="KW-0631">Potassium channel</keyword>
<keyword id="KW-0633">Potassium transport</keyword>
<keyword id="KW-1185">Reference proteome</keyword>
<keyword id="KW-0915">Sodium</keyword>
<keyword id="KW-0894">Sodium channel</keyword>
<keyword id="KW-0739">Sodium transport</keyword>
<keyword id="KW-0812">Transmembrane</keyword>
<keyword id="KW-1133">Transmembrane helix</keyword>
<keyword id="KW-0813">Transport</keyword>
<feature type="chain" id="PRO_0000101753" description="Potassium channel subfamily K member 9">
    <location>
        <begin position="1"/>
        <end position="365"/>
    </location>
</feature>
<feature type="topological domain" description="Cytoplasmic" evidence="5">
    <location>
        <begin position="1"/>
        <end position="8"/>
    </location>
</feature>
<feature type="transmembrane region" description="Helical" evidence="5">
    <location>
        <begin position="9"/>
        <end position="29"/>
    </location>
</feature>
<feature type="topological domain" description="Extracellular" evidence="5">
    <location>
        <begin position="30"/>
        <end position="88"/>
    </location>
</feature>
<feature type="intramembrane region" description="Pore-forming; Name=Pore-forming 1" evidence="5">
    <location>
        <begin position="89"/>
        <end position="101"/>
    </location>
</feature>
<feature type="topological domain" description="Extracellular" evidence="5">
    <location>
        <begin position="102"/>
        <end position="107"/>
    </location>
</feature>
<feature type="transmembrane region" description="Helical" evidence="5">
    <location>
        <begin position="108"/>
        <end position="128"/>
    </location>
</feature>
<feature type="topological domain" description="Cytoplasmic" evidence="5">
    <location>
        <begin position="129"/>
        <end position="158"/>
    </location>
</feature>
<feature type="transmembrane region" description="Helical" evidence="5">
    <location>
        <begin position="159"/>
        <end position="179"/>
    </location>
</feature>
<feature type="topological domain" description="Extracellular" evidence="5">
    <location>
        <begin position="180"/>
        <end position="194"/>
    </location>
</feature>
<feature type="intramembrane region" description="Pore-forming; Name=Pore-forming 2" evidence="5">
    <location>
        <begin position="195"/>
        <end position="207"/>
    </location>
</feature>
<feature type="topological domain" description="Extracellular" evidence="5">
    <location>
        <begin position="208"/>
        <end position="218"/>
    </location>
</feature>
<feature type="transmembrane region" description="Helical" evidence="5">
    <location>
        <begin position="219"/>
        <end position="239"/>
    </location>
</feature>
<feature type="topological domain" description="Cytoplasmic" evidence="5">
    <location>
        <begin position="240"/>
        <end position="365"/>
    </location>
</feature>
<feature type="region of interest" description="Selectivity filter 1" evidence="4">
    <location>
        <begin position="93"/>
        <end position="98"/>
    </location>
</feature>
<feature type="region of interest" description="Selectivity filter 2" evidence="4">
    <location>
        <begin position="199"/>
        <end position="204"/>
    </location>
</feature>
<feature type="region of interest" description="X-gate" evidence="4">
    <location>
        <begin position="243"/>
        <end position="248"/>
    </location>
</feature>
<feature type="binding site" evidence="4">
    <location>
        <position position="93"/>
    </location>
    <ligand>
        <name>K(+)</name>
        <dbReference type="ChEBI" id="CHEBI:29103"/>
        <label>1</label>
    </ligand>
</feature>
<feature type="binding site" evidence="1">
    <location>
        <position position="93"/>
    </location>
    <ligand>
        <name>K(+)</name>
        <dbReference type="ChEBI" id="CHEBI:29103"/>
        <label>4</label>
    </ligand>
</feature>
<feature type="binding site" evidence="1">
    <location>
        <position position="94"/>
    </location>
    <ligand>
        <name>K(+)</name>
        <dbReference type="ChEBI" id="CHEBI:29103"/>
        <label>1</label>
    </ligand>
</feature>
<feature type="binding site" evidence="1">
    <location>
        <position position="94"/>
    </location>
    <ligand>
        <name>K(+)</name>
        <dbReference type="ChEBI" id="CHEBI:29103"/>
        <label>2</label>
    </ligand>
</feature>
<feature type="binding site" evidence="1">
    <location>
        <position position="95"/>
    </location>
    <ligand>
        <name>K(+)</name>
        <dbReference type="ChEBI" id="CHEBI:29103"/>
        <label>2</label>
    </ligand>
</feature>
<feature type="binding site" evidence="1">
    <location>
        <position position="95"/>
    </location>
    <ligand>
        <name>K(+)</name>
        <dbReference type="ChEBI" id="CHEBI:29103"/>
        <label>3</label>
    </ligand>
</feature>
<feature type="binding site" evidence="1">
    <location>
        <position position="96"/>
    </location>
    <ligand>
        <name>K(+)</name>
        <dbReference type="ChEBI" id="CHEBI:29103"/>
        <label>3</label>
    </ligand>
</feature>
<feature type="binding site" evidence="4">
    <location>
        <position position="199"/>
    </location>
    <ligand>
        <name>K(+)</name>
        <dbReference type="ChEBI" id="CHEBI:29103"/>
        <label>1</label>
    </ligand>
</feature>
<feature type="binding site" evidence="1">
    <location>
        <position position="199"/>
    </location>
    <ligand>
        <name>K(+)</name>
        <dbReference type="ChEBI" id="CHEBI:29103"/>
        <label>4</label>
    </ligand>
</feature>
<feature type="binding site" evidence="1">
    <location>
        <position position="200"/>
    </location>
    <ligand>
        <name>K(+)</name>
        <dbReference type="ChEBI" id="CHEBI:29103"/>
        <label>1</label>
    </ligand>
</feature>
<feature type="binding site" evidence="1">
    <location>
        <position position="200"/>
    </location>
    <ligand>
        <name>K(+)</name>
        <dbReference type="ChEBI" id="CHEBI:29103"/>
        <label>2</label>
    </ligand>
</feature>
<feature type="binding site" evidence="1">
    <location>
        <position position="201"/>
    </location>
    <ligand>
        <name>K(+)</name>
        <dbReference type="ChEBI" id="CHEBI:29103"/>
        <label>2</label>
    </ligand>
</feature>
<feature type="binding site" evidence="1">
    <location>
        <position position="201"/>
    </location>
    <ligand>
        <name>K(+)</name>
        <dbReference type="ChEBI" id="CHEBI:29103"/>
        <label>3</label>
    </ligand>
</feature>
<feature type="binding site" evidence="1">
    <location>
        <position position="202"/>
    </location>
    <ligand>
        <name>K(+)</name>
        <dbReference type="ChEBI" id="CHEBI:29103"/>
        <label>3</label>
    </ligand>
</feature>
<feature type="site" description="Forms a cation-pi interaction with protonated H-98, stabilizing the C-type inactivated state" evidence="4">
    <location>
        <position position="78"/>
    </location>
</feature>
<feature type="site" description="pH sensor" evidence="6">
    <location>
        <position position="98"/>
    </location>
</feature>
<feature type="glycosylation site" description="N-linked (GlcNAc...) asparagine" evidence="5">
    <location>
        <position position="53"/>
    </location>
</feature>
<feature type="mutagenesis site" description="Reduces sensitivity to alterations in external pH." evidence="6">
    <original>H</original>
    <variation>N</variation>
    <variation>Y</variation>
    <location>
        <position position="98"/>
    </location>
</feature>
<proteinExistence type="evidence at protein level"/>
<protein>
    <recommendedName>
        <fullName>Potassium channel subfamily K member 9</fullName>
    </recommendedName>
    <alternativeName>
        <fullName>Acid-sensitive potassium channel protein TASK-3</fullName>
    </alternativeName>
    <alternativeName>
        <fullName>TWIK-related acid-sensitive K(+) channel 3</fullName>
    </alternativeName>
</protein>
<comment type="function">
    <text evidence="2 3 4 6">K(+) channel that conducts voltage-dependent outward rectifying currents upon membrane depolarization. Voltage sensing is coupled to K(+) electrochemical gradient in an 'ion flux gating' mode where outward but not inward ion flow opens the gate (By similarity) (PubMed:10747866). Changes ion selectivity and becomes permeable to Na(+) ions in response to extracellular acidification. Protonation of the pH sensor His-98 stabilizes C-type inactivation conformation likely converting the channel from outward K(+)-conducting, to inward Na(+)-conducting to nonconductive state (By similarity). Homo- and heterodimerizes to form functional channels with distinct regulatory and gating properties (By similarity). Allows K(+) currents with fast-gating kinetics important for the repolarization and hyperpolarization phases of action potentials (By similarity). In granule neurons, hyperpolarizes the resting membrane potential to limit intrinsic neuronal excitability, but once the action potential threshold is reached, supports high-frequency action potential firing and increased neuronal excitability. Homomeric and/or heteromeric KCNK3:KCNK9 channels operate in cerebellar granule cells, whereas heteromeric KCNK1:KCNK9 enables currents in hippocampal dentate gyrus granule neurons (By similarity). Dispensable for central chemosensory respiration i.e. breathing controlled by brainstem CO2/pH, it rather conducts pH-sensitive currents and controls the firing rate of serotonergic raphe neurons involved in potentiation of the respiratory chemoreflex (By similarity). In retinal ganglion cells, mediates outward rectifying currents that regulate action potentials in response to acidification of the synaptic cleft. Involved in transmission of image-forming and nonimage-forming visual information in the retina (By similarity). In adrenal gland, contributes to the maintenance of a hyperpolarized resting membrane potential of aldosterone-producing cells at zona glomerulosa and limits aldosterone release as part of a regulatory mechanism that controls arterial blood pressure and electrolyte homeostasis (By similarity).</text>
</comment>
<comment type="catalytic activity">
    <reaction evidence="6">
        <text>K(+)(in) = K(+)(out)</text>
        <dbReference type="Rhea" id="RHEA:29463"/>
        <dbReference type="ChEBI" id="CHEBI:29103"/>
    </reaction>
</comment>
<comment type="catalytic activity">
    <reaction evidence="4">
        <text>Na(+)(in) = Na(+)(out)</text>
        <dbReference type="Rhea" id="RHEA:34963"/>
        <dbReference type="ChEBI" id="CHEBI:29101"/>
    </reaction>
</comment>
<comment type="activity regulation">
    <text evidence="6">Inhibited by extracellular acidification.</text>
</comment>
<comment type="subunit">
    <text evidence="3 4">Homodimer. Heterodimer with KCNK1 (By similarity). Heterodimer with KCNK3 (By similarity).</text>
</comment>
<comment type="subcellular location">
    <subcellularLocation>
        <location evidence="2">Cell membrane</location>
        <topology evidence="5">Multi-pass membrane protein</topology>
    </subcellularLocation>
    <subcellularLocation>
        <location evidence="2">Mitochondrion inner membrane</location>
        <topology evidence="5">Multi-pass membrane protein</topology>
    </subcellularLocation>
    <subcellularLocation>
        <location evidence="2">Cell projection</location>
        <location evidence="2">Dendrite</location>
    </subcellularLocation>
    <text evidence="2">Colocalizes with MAP2 in the soma and proximal dendrites of dentate gyrus granule cells.</text>
</comment>
<comment type="tissue specificity">
    <text evidence="6">Highly expressed in the brain.</text>
</comment>
<comment type="domain">
    <text evidence="4">Each subunit contributes two pore-forming domains 1 and 2 which assemble to form a single pore with M2 and M4 transmembrane helices lining the central cavity and M1 and M3 facing the lipid bilayer. The transmembrane helices are bridged by the selectivity filters 1 and 2 carrying a signature sequence TxTTxG(Y/F)G(D/H) that coordinate the permeant ions. Up to four ions can simultaneously occupy the selectivity filter and at least two elementary charges must translocate across the filter to convert it into the open conformation.</text>
</comment>
<comment type="domain">
    <text evidence="4">The X-gate is positioned at the distal ends of M4 transmembrane helices forming a two-turn-helical structure with the methyl group of Thr-248 closing the ion conduction pathway.</text>
</comment>
<comment type="similarity">
    <text evidence="7">Belongs to the two pore domain potassium channel (TC 1.A.1.8) family.</text>
</comment>